<feature type="initiator methionine" description="Removed" evidence="7">
    <location>
        <position position="1"/>
    </location>
</feature>
<feature type="chain" id="PRO_0000388466" description="Protein XAP5 CIRCADIAN TIMEKEEPER">
    <location>
        <begin position="2"/>
        <end position="337"/>
    </location>
</feature>
<feature type="region of interest" description="Disordered" evidence="2">
    <location>
        <begin position="23"/>
        <end position="47"/>
    </location>
</feature>
<feature type="region of interest" description="Disordered" evidence="2">
    <location>
        <begin position="125"/>
        <end position="174"/>
    </location>
</feature>
<feature type="coiled-coil region" evidence="1">
    <location>
        <begin position="13"/>
        <end position="41"/>
    </location>
</feature>
<feature type="coiled-coil region" evidence="1">
    <location>
        <begin position="72"/>
        <end position="121"/>
    </location>
</feature>
<feature type="compositionally biased region" description="Basic and acidic residues" evidence="2">
    <location>
        <begin position="23"/>
        <end position="37"/>
    </location>
</feature>
<feature type="compositionally biased region" description="Polar residues" evidence="2">
    <location>
        <begin position="38"/>
        <end position="47"/>
    </location>
</feature>
<feature type="compositionally biased region" description="Acidic residues" evidence="2">
    <location>
        <begin position="126"/>
        <end position="137"/>
    </location>
</feature>
<feature type="compositionally biased region" description="Basic and acidic residues" evidence="2">
    <location>
        <begin position="165"/>
        <end position="174"/>
    </location>
</feature>
<feature type="modified residue" description="N-acetylserine" evidence="7">
    <location>
        <position position="2"/>
    </location>
</feature>
<feature type="modified residue" description="Phosphoserine" evidence="5 6">
    <location>
        <position position="132"/>
    </location>
</feature>
<feature type="mutagenesis site" description="In xct-1; shortened circadian period." evidence="3">
    <location>
        <begin position="210"/>
        <end position="212"/>
    </location>
</feature>
<gene>
    <name type="primary">XCT</name>
    <name type="ordered locus">At2g21150</name>
    <name type="ORF">F26H11.9</name>
</gene>
<keyword id="KW-0007">Acetylation</keyword>
<keyword id="KW-0025">Alternative splicing</keyword>
<keyword id="KW-0090">Biological rhythms</keyword>
<keyword id="KW-0175">Coiled coil</keyword>
<keyword id="KW-0539">Nucleus</keyword>
<keyword id="KW-0597">Phosphoprotein</keyword>
<keyword id="KW-1185">Reference proteome</keyword>
<organism>
    <name type="scientific">Arabidopsis thaliana</name>
    <name type="common">Mouse-ear cress</name>
    <dbReference type="NCBI Taxonomy" id="3702"/>
    <lineage>
        <taxon>Eukaryota</taxon>
        <taxon>Viridiplantae</taxon>
        <taxon>Streptophyta</taxon>
        <taxon>Embryophyta</taxon>
        <taxon>Tracheophyta</taxon>
        <taxon>Spermatophyta</taxon>
        <taxon>Magnoliopsida</taxon>
        <taxon>eudicotyledons</taxon>
        <taxon>Gunneridae</taxon>
        <taxon>Pentapetalae</taxon>
        <taxon>rosids</taxon>
        <taxon>malvids</taxon>
        <taxon>Brassicales</taxon>
        <taxon>Brassicaceae</taxon>
        <taxon>Camelineae</taxon>
        <taxon>Arabidopsis</taxon>
    </lineage>
</organism>
<sequence>MSGMGDGYVGTAQDAVRIRRLQKQREAERKKIQELKSKSASGNDQSGLLQFGTSSCEILDTAFKKETVGLVTREEYVEKRVNIRNKFEEEEKEKLQKLQQEEEELQLEKRNKKRKIKGSSRLSFAEDFENGSDEDDGENKSSGTGNLRCGKLGKDPSVETNFLPDSEREAEEQAERERLKKQWLREQEQIKNEPLEITYSYWDGTGHRRVIQVRKGDPIGNFLRAVQQQLAPDFREIRTASVENLLYVKEDLIIPHQHSFYELIINKARGKSGPLFHFDVHEDVRTIADATIEKDESHAGKVVERHWYEKNKHIFPASRWEIYDPTKKWERYTVHGD</sequence>
<reference key="1">
    <citation type="journal article" date="1999" name="Nature">
        <title>Sequence and analysis of chromosome 2 of the plant Arabidopsis thaliana.</title>
        <authorList>
            <person name="Lin X."/>
            <person name="Kaul S."/>
            <person name="Rounsley S.D."/>
            <person name="Shea T.P."/>
            <person name="Benito M.-I."/>
            <person name="Town C.D."/>
            <person name="Fujii C.Y."/>
            <person name="Mason T.M."/>
            <person name="Bowman C.L."/>
            <person name="Barnstead M.E."/>
            <person name="Feldblyum T.V."/>
            <person name="Buell C.R."/>
            <person name="Ketchum K.A."/>
            <person name="Lee J.J."/>
            <person name="Ronning C.M."/>
            <person name="Koo H.L."/>
            <person name="Moffat K.S."/>
            <person name="Cronin L.A."/>
            <person name="Shen M."/>
            <person name="Pai G."/>
            <person name="Van Aken S."/>
            <person name="Umayam L."/>
            <person name="Tallon L.J."/>
            <person name="Gill J.E."/>
            <person name="Adams M.D."/>
            <person name="Carrera A.J."/>
            <person name="Creasy T.H."/>
            <person name="Goodman H.M."/>
            <person name="Somerville C.R."/>
            <person name="Copenhaver G.P."/>
            <person name="Preuss D."/>
            <person name="Nierman W.C."/>
            <person name="White O."/>
            <person name="Eisen J.A."/>
            <person name="Salzberg S.L."/>
            <person name="Fraser C.M."/>
            <person name="Venter J.C."/>
        </authorList>
    </citation>
    <scope>NUCLEOTIDE SEQUENCE [LARGE SCALE GENOMIC DNA]</scope>
    <source>
        <strain>cv. Columbia</strain>
    </source>
</reference>
<reference key="2">
    <citation type="journal article" date="2017" name="Plant J.">
        <title>Araport11: a complete reannotation of the Arabidopsis thaliana reference genome.</title>
        <authorList>
            <person name="Cheng C.Y."/>
            <person name="Krishnakumar V."/>
            <person name="Chan A.P."/>
            <person name="Thibaud-Nissen F."/>
            <person name="Schobel S."/>
            <person name="Town C.D."/>
        </authorList>
    </citation>
    <scope>GENOME REANNOTATION</scope>
    <source>
        <strain>cv. Columbia</strain>
    </source>
</reference>
<reference key="3">
    <citation type="journal article" date="2003" name="Science">
        <title>Empirical analysis of transcriptional activity in the Arabidopsis genome.</title>
        <authorList>
            <person name="Yamada K."/>
            <person name="Lim J."/>
            <person name="Dale J.M."/>
            <person name="Chen H."/>
            <person name="Shinn P."/>
            <person name="Palm C.J."/>
            <person name="Southwick A.M."/>
            <person name="Wu H.C."/>
            <person name="Kim C.J."/>
            <person name="Nguyen M."/>
            <person name="Pham P.K."/>
            <person name="Cheuk R.F."/>
            <person name="Karlin-Newmann G."/>
            <person name="Liu S.X."/>
            <person name="Lam B."/>
            <person name="Sakano H."/>
            <person name="Wu T."/>
            <person name="Yu G."/>
            <person name="Miranda M."/>
            <person name="Quach H.L."/>
            <person name="Tripp M."/>
            <person name="Chang C.H."/>
            <person name="Lee J.M."/>
            <person name="Toriumi M.J."/>
            <person name="Chan M.M."/>
            <person name="Tang C.C."/>
            <person name="Onodera C.S."/>
            <person name="Deng J.M."/>
            <person name="Akiyama K."/>
            <person name="Ansari Y."/>
            <person name="Arakawa T."/>
            <person name="Banh J."/>
            <person name="Banno F."/>
            <person name="Bowser L."/>
            <person name="Brooks S.Y."/>
            <person name="Carninci P."/>
            <person name="Chao Q."/>
            <person name="Choy N."/>
            <person name="Enju A."/>
            <person name="Goldsmith A.D."/>
            <person name="Gurjal M."/>
            <person name="Hansen N.F."/>
            <person name="Hayashizaki Y."/>
            <person name="Johnson-Hopson C."/>
            <person name="Hsuan V.W."/>
            <person name="Iida K."/>
            <person name="Karnes M."/>
            <person name="Khan S."/>
            <person name="Koesema E."/>
            <person name="Ishida J."/>
            <person name="Jiang P.X."/>
            <person name="Jones T."/>
            <person name="Kawai J."/>
            <person name="Kamiya A."/>
            <person name="Meyers C."/>
            <person name="Nakajima M."/>
            <person name="Narusaka M."/>
            <person name="Seki M."/>
            <person name="Sakurai T."/>
            <person name="Satou M."/>
            <person name="Tamse R."/>
            <person name="Vaysberg M."/>
            <person name="Wallender E.K."/>
            <person name="Wong C."/>
            <person name="Yamamura Y."/>
            <person name="Yuan S."/>
            <person name="Shinozaki K."/>
            <person name="Davis R.W."/>
            <person name="Theologis A."/>
            <person name="Ecker J.R."/>
        </authorList>
    </citation>
    <scope>NUCLEOTIDE SEQUENCE [LARGE SCALE MRNA]</scope>
    <source>
        <strain>cv. Columbia</strain>
    </source>
</reference>
<reference key="4">
    <citation type="journal article" date="2008" name="Plant Cell">
        <title>XAP5 CIRCADIAN TIMEKEEPER coordinates light signals for proper timing of photomorphogenesis and the circadian clock in Arabidopsis.</title>
        <authorList>
            <person name="Martin-Tryon E.L."/>
            <person name="Harmer S.L."/>
        </authorList>
    </citation>
    <scope>FUNCTION</scope>
    <scope>MUTAGENESIS OF 210-VAL--GLN-212</scope>
    <scope>ALTERNATIVE SPLICING</scope>
    <scope>SUBCELLULAR LOCATION</scope>
    <scope>DEVELOPMENTAL STAGE</scope>
    <scope>TISSUE SPECIFICITY</scope>
    <scope>DISRUPTION PHENOTYPE</scope>
</reference>
<reference key="5">
    <citation type="journal article" date="2009" name="J. Proteomics">
        <title>Phosphoproteomic analysis of nuclei-enriched fractions from Arabidopsis thaliana.</title>
        <authorList>
            <person name="Jones A.M.E."/>
            <person name="MacLean D."/>
            <person name="Studholme D.J."/>
            <person name="Serna-Sanz A."/>
            <person name="Andreasson E."/>
            <person name="Rathjen J.P."/>
            <person name="Peck S.C."/>
        </authorList>
    </citation>
    <scope>PHOSPHORYLATION [LARGE SCALE ANALYSIS] AT SER-132</scope>
    <scope>IDENTIFICATION BY MASS SPECTROMETRY [LARGE SCALE ANALYSIS]</scope>
    <source>
        <strain>cv. Columbia</strain>
    </source>
</reference>
<reference key="6">
    <citation type="journal article" date="2009" name="Plant Physiol.">
        <title>Large-scale Arabidopsis phosphoproteome profiling reveals novel chloroplast kinase substrates and phosphorylation networks.</title>
        <authorList>
            <person name="Reiland S."/>
            <person name="Messerli G."/>
            <person name="Baerenfaller K."/>
            <person name="Gerrits B."/>
            <person name="Endler A."/>
            <person name="Grossmann J."/>
            <person name="Gruissem W."/>
            <person name="Baginsky S."/>
        </authorList>
    </citation>
    <scope>PHOSPHORYLATION [LARGE SCALE ANALYSIS] AT SER-132</scope>
    <scope>IDENTIFICATION BY MASS SPECTROMETRY [LARGE SCALE ANALYSIS]</scope>
</reference>
<reference key="7">
    <citation type="journal article" date="2012" name="Mol. Cell. Proteomics">
        <title>Comparative large-scale characterisation of plant vs. mammal proteins reveals similar and idiosyncratic N-alpha acetylation features.</title>
        <authorList>
            <person name="Bienvenut W.V."/>
            <person name="Sumpton D."/>
            <person name="Martinez A."/>
            <person name="Lilla S."/>
            <person name="Espagne C."/>
            <person name="Meinnel T."/>
            <person name="Giglione C."/>
        </authorList>
    </citation>
    <scope>ACETYLATION [LARGE SCALE ANALYSIS] AT SER-2</scope>
    <scope>CLEAVAGE OF INITIATOR METHIONINE [LARGE SCALE ANALYSIS]</scope>
    <scope>IDENTIFICATION BY MASS SPECTROMETRY [LARGE SCALE ANALYSIS]</scope>
</reference>
<name>XCT_ARATH</name>
<accession>Q8H110</accession>
<accession>Q9SKP8</accession>
<protein>
    <recommendedName>
        <fullName>Protein XAP5 CIRCADIAN TIMEKEEPER</fullName>
    </recommendedName>
</protein>
<proteinExistence type="evidence at protein level"/>
<evidence type="ECO:0000255" key="1"/>
<evidence type="ECO:0000256" key="2">
    <source>
        <dbReference type="SAM" id="MobiDB-lite"/>
    </source>
</evidence>
<evidence type="ECO:0000269" key="3">
    <source>
    </source>
</evidence>
<evidence type="ECO:0000305" key="4"/>
<evidence type="ECO:0007744" key="5">
    <source>
    </source>
</evidence>
<evidence type="ECO:0007744" key="6">
    <source>
    </source>
</evidence>
<evidence type="ECO:0007744" key="7">
    <source>
    </source>
</evidence>
<dbReference type="EMBL" id="AC006264">
    <property type="protein sequence ID" value="AAD29801.1"/>
    <property type="status" value="ALT_SEQ"/>
    <property type="molecule type" value="Genomic_DNA"/>
</dbReference>
<dbReference type="EMBL" id="CP002685">
    <property type="protein sequence ID" value="AEC07128.1"/>
    <property type="molecule type" value="Genomic_DNA"/>
</dbReference>
<dbReference type="EMBL" id="BT000912">
    <property type="protein sequence ID" value="AAN41312.1"/>
    <property type="molecule type" value="mRNA"/>
</dbReference>
<dbReference type="PIR" id="G84597">
    <property type="entry name" value="G84597"/>
</dbReference>
<dbReference type="RefSeq" id="NP_179711.2">
    <molecule id="Q8H110-1"/>
    <property type="nucleotide sequence ID" value="NM_127685.4"/>
</dbReference>
<dbReference type="SMR" id="Q8H110"/>
<dbReference type="FunCoup" id="Q8H110">
    <property type="interactions" value="2885"/>
</dbReference>
<dbReference type="STRING" id="3702.Q8H110"/>
<dbReference type="iPTMnet" id="Q8H110"/>
<dbReference type="PaxDb" id="3702-AT2G21150.1"/>
<dbReference type="ProteomicsDB" id="242468">
    <molecule id="Q8H110-1"/>
</dbReference>
<dbReference type="EnsemblPlants" id="AT2G21150.1">
    <molecule id="Q8H110-1"/>
    <property type="protein sequence ID" value="AT2G21150.1"/>
    <property type="gene ID" value="AT2G21150"/>
</dbReference>
<dbReference type="GeneID" id="816650"/>
<dbReference type="Gramene" id="AT2G21150.1">
    <molecule id="Q8H110-1"/>
    <property type="protein sequence ID" value="AT2G21150.1"/>
    <property type="gene ID" value="AT2G21150"/>
</dbReference>
<dbReference type="KEGG" id="ath:AT2G21150"/>
<dbReference type="Araport" id="AT2G21150"/>
<dbReference type="TAIR" id="AT2G21150">
    <property type="gene designation" value="XCT"/>
</dbReference>
<dbReference type="eggNOG" id="KOG2894">
    <property type="taxonomic scope" value="Eukaryota"/>
</dbReference>
<dbReference type="HOGENOM" id="CLU_037985_1_1_1"/>
<dbReference type="InParanoid" id="Q8H110"/>
<dbReference type="OMA" id="DFIWVFL"/>
<dbReference type="OrthoDB" id="1562195at2759"/>
<dbReference type="PhylomeDB" id="Q8H110"/>
<dbReference type="CD-CODE" id="4299E36E">
    <property type="entry name" value="Nucleolus"/>
</dbReference>
<dbReference type="PRO" id="PR:Q8H110"/>
<dbReference type="Proteomes" id="UP000006548">
    <property type="component" value="Chromosome 2"/>
</dbReference>
<dbReference type="ExpressionAtlas" id="Q8H110">
    <property type="expression patterns" value="baseline and differential"/>
</dbReference>
<dbReference type="GO" id="GO:0005634">
    <property type="term" value="C:nucleus"/>
    <property type="evidence" value="ECO:0000314"/>
    <property type="project" value="TAIR"/>
</dbReference>
<dbReference type="GO" id="GO:0009873">
    <property type="term" value="P:ethylene-activated signaling pathway"/>
    <property type="evidence" value="ECO:0000315"/>
    <property type="project" value="TAIR"/>
</dbReference>
<dbReference type="GO" id="GO:0035196">
    <property type="term" value="P:miRNA processing"/>
    <property type="evidence" value="ECO:0000315"/>
    <property type="project" value="TAIR"/>
</dbReference>
<dbReference type="GO" id="GO:0042752">
    <property type="term" value="P:regulation of circadian rhythm"/>
    <property type="evidence" value="ECO:0000315"/>
    <property type="project" value="TAIR"/>
</dbReference>
<dbReference type="GO" id="GO:0010099">
    <property type="term" value="P:regulation of photomorphogenesis"/>
    <property type="evidence" value="ECO:0000315"/>
    <property type="project" value="TAIR"/>
</dbReference>
<dbReference type="GO" id="GO:0009637">
    <property type="term" value="P:response to blue light"/>
    <property type="evidence" value="ECO:0000315"/>
    <property type="project" value="TAIR"/>
</dbReference>
<dbReference type="GO" id="GO:0010114">
    <property type="term" value="P:response to red light"/>
    <property type="evidence" value="ECO:0000315"/>
    <property type="project" value="TAIR"/>
</dbReference>
<dbReference type="GO" id="GO:0048511">
    <property type="term" value="P:rhythmic process"/>
    <property type="evidence" value="ECO:0007669"/>
    <property type="project" value="UniProtKB-KW"/>
</dbReference>
<dbReference type="InterPro" id="IPR048337">
    <property type="entry name" value="FAM50A/XAP5_C"/>
</dbReference>
<dbReference type="InterPro" id="IPR007005">
    <property type="entry name" value="XAP5"/>
</dbReference>
<dbReference type="PANTHER" id="PTHR12722:SF0">
    <property type="entry name" value="PROTEIN FAM50A"/>
    <property type="match status" value="1"/>
</dbReference>
<dbReference type="PANTHER" id="PTHR12722">
    <property type="entry name" value="XAP-5 PROTEIN-RELATED"/>
    <property type="match status" value="1"/>
</dbReference>
<dbReference type="Pfam" id="PF04921">
    <property type="entry name" value="XAP5"/>
    <property type="match status" value="1"/>
</dbReference>
<comment type="function">
    <text evidence="3">Involved in light regulation of the circadian clock and photomorphogenesis. May play a global role in coordinating growth in response to the light environment. Acts as a light quality sensor directing both negative and positive transcriptional regulation. Inhibits growth in red light but promote growth in blue light. Inhibits clock gene expression in diurnal cycles. Plays no role in the control of flowering time.</text>
</comment>
<comment type="subcellular location">
    <subcellularLocation>
        <location evidence="3">Nucleus</location>
    </subcellularLocation>
</comment>
<comment type="alternative products">
    <event type="alternative splicing"/>
    <isoform>
        <id>Q8H110-1</id>
        <name>1</name>
        <sequence type="displayed"/>
    </isoform>
    <text>A number of isoforms are produced.</text>
</comment>
<comment type="tissue specificity">
    <text evidence="3">Expressed in leaves stems, flowers, roots, trichomes and hypocotyls.</text>
</comment>
<comment type="developmental stage">
    <text evidence="3">Present in nucleus throughout development.</text>
</comment>
<comment type="induction">
    <text>Post transcriptionally regulated. No circadian-regulation at the mRNA level, but fluctuation of the protein levels, with the highest level found shortly after dawn.</text>
</comment>
<comment type="disruption phenotype">
    <text evidence="3">Shortened circadian period. The clock is hypersensitive to red but shows normal responses to blue light. By contrast, inhibition of hypocotyl elongation is hyposensitive to red light but hypersensitive to blue light.</text>
</comment>
<comment type="similarity">
    <text evidence="4">Belongs to the FAM50 family.</text>
</comment>
<comment type="sequence caution" evidence="4">
    <conflict type="erroneous gene model prediction">
        <sequence resource="EMBL-CDS" id="AAD29801"/>
    </conflict>
</comment>